<reference key="1">
    <citation type="submission" date="2005-08" db="EMBL/GenBank/DDBJ databases">
        <authorList>
            <consortium name="NIH - Xenopus Gene Collection (XGC) project"/>
        </authorList>
    </citation>
    <scope>NUCLEOTIDE SEQUENCE [LARGE SCALE MRNA]</scope>
    <source>
        <tissue>Embryo</tissue>
    </source>
</reference>
<gene>
    <name type="primary">spata18</name>
    <name type="synonym">mieap</name>
</gene>
<accession>Q498J5</accession>
<evidence type="ECO:0000250" key="1">
    <source>
        <dbReference type="UniProtKB" id="Q8TC71"/>
    </source>
</evidence>
<evidence type="ECO:0000255" key="2"/>
<evidence type="ECO:0000256" key="3">
    <source>
        <dbReference type="SAM" id="MobiDB-lite"/>
    </source>
</evidence>
<evidence type="ECO:0000305" key="4"/>
<feature type="chain" id="PRO_0000254169" description="Mitochondria-eating protein">
    <location>
        <begin position="1"/>
        <end position="485"/>
    </location>
</feature>
<feature type="region of interest" description="Disordered" evidence="3">
    <location>
        <begin position="214"/>
        <end position="244"/>
    </location>
</feature>
<feature type="region of interest" description="Disordered" evidence="3">
    <location>
        <begin position="451"/>
        <end position="485"/>
    </location>
</feature>
<feature type="coiled-coil region" evidence="2">
    <location>
        <begin position="112"/>
        <end position="210"/>
    </location>
</feature>
<feature type="compositionally biased region" description="Low complexity" evidence="3">
    <location>
        <begin position="214"/>
        <end position="241"/>
    </location>
</feature>
<feature type="compositionally biased region" description="Low complexity" evidence="3">
    <location>
        <begin position="471"/>
        <end position="485"/>
    </location>
</feature>
<sequence length="485" mass="55139">MADILRRLTNSERCRLLQDKLDDWYKDYHINSCDSNLNVCCELLELNSKVQGQLFKILSVTAQEGGQYAGVETIKSRFLPWLGTCFSTASPGSFSENSFVTLNESMERKLSTSHERELNEVESKLSSTRIELNSVRQELLETQMDLEDTKTKSANTLLATEEEILQLRAELRAAREKLELRSLDSIDEYERQIRLLKDEISILSSESSILKSRLSRSRSPSPIRHSSRSSSPFARSESPTSAKLTSASRQARLISRFNDIFANDRLDAQTLLRRYIQDLDMVQRIIFIATVESFHSAKMAFRQFRLRVCKSLSPSHMGPESLEDAVIDYIVGNLDLYDVQSSVNEVISAMNVNPKISFPPEVDFILISGFIQEVCRVAFTMQTLDPPLDIAFTVDGELFTDSKYRRTYDSEHTAPLVYYHVWPALMENDNVIVKGEAVTKRGALWNSIRSRSRSASPLRSHSDSPGHNLTRSRSPSPRRSGTPRF</sequence>
<organism>
    <name type="scientific">Xenopus laevis</name>
    <name type="common">African clawed frog</name>
    <dbReference type="NCBI Taxonomy" id="8355"/>
    <lineage>
        <taxon>Eukaryota</taxon>
        <taxon>Metazoa</taxon>
        <taxon>Chordata</taxon>
        <taxon>Craniata</taxon>
        <taxon>Vertebrata</taxon>
        <taxon>Euteleostomi</taxon>
        <taxon>Amphibia</taxon>
        <taxon>Batrachia</taxon>
        <taxon>Anura</taxon>
        <taxon>Pipoidea</taxon>
        <taxon>Pipidae</taxon>
        <taxon>Xenopodinae</taxon>
        <taxon>Xenopus</taxon>
        <taxon>Xenopus</taxon>
    </lineage>
</organism>
<protein>
    <recommendedName>
        <fullName>Mitochondria-eating protein</fullName>
    </recommendedName>
    <alternativeName>
        <fullName>Spermatogenesis-associated protein 18</fullName>
    </alternativeName>
</protein>
<keyword id="KW-0175">Coiled coil</keyword>
<keyword id="KW-0963">Cytoplasm</keyword>
<keyword id="KW-0446">Lipid-binding</keyword>
<keyword id="KW-0472">Membrane</keyword>
<keyword id="KW-0496">Mitochondrion</keyword>
<keyword id="KW-1000">Mitochondrion outer membrane</keyword>
<keyword id="KW-1185">Reference proteome</keyword>
<dbReference type="EMBL" id="BC100193">
    <property type="protein sequence ID" value="AAI00194.1"/>
    <property type="molecule type" value="mRNA"/>
</dbReference>
<dbReference type="RefSeq" id="NP_001089651.1">
    <property type="nucleotide sequence ID" value="NM_001096182.1"/>
</dbReference>
<dbReference type="SMR" id="Q498J5"/>
<dbReference type="DNASU" id="734711"/>
<dbReference type="GeneID" id="734711"/>
<dbReference type="KEGG" id="xla:734711"/>
<dbReference type="AGR" id="Xenbase:XB-GENE-5812351"/>
<dbReference type="CTD" id="734711"/>
<dbReference type="Xenbase" id="XB-GENE-5812351">
    <property type="gene designation" value="spata18b.S"/>
</dbReference>
<dbReference type="OrthoDB" id="5966837at2759"/>
<dbReference type="Proteomes" id="UP000186698">
    <property type="component" value="Chromosome 3S"/>
</dbReference>
<dbReference type="Bgee" id="734711">
    <property type="expression patterns" value="Expressed in testis and 12 other cell types or tissues"/>
</dbReference>
<dbReference type="GO" id="GO:0005737">
    <property type="term" value="C:cytoplasm"/>
    <property type="evidence" value="ECO:0000250"/>
    <property type="project" value="UniProtKB"/>
</dbReference>
<dbReference type="GO" id="GO:0043231">
    <property type="term" value="C:intracellular membrane-bounded organelle"/>
    <property type="evidence" value="ECO:0000250"/>
    <property type="project" value="UniProtKB"/>
</dbReference>
<dbReference type="GO" id="GO:0005759">
    <property type="term" value="C:mitochondrial matrix"/>
    <property type="evidence" value="ECO:0000250"/>
    <property type="project" value="UniProtKB"/>
</dbReference>
<dbReference type="GO" id="GO:0005741">
    <property type="term" value="C:mitochondrial outer membrane"/>
    <property type="evidence" value="ECO:0000318"/>
    <property type="project" value="GO_Central"/>
</dbReference>
<dbReference type="GO" id="GO:0005739">
    <property type="term" value="C:mitochondrion"/>
    <property type="evidence" value="ECO:0000250"/>
    <property type="project" value="UniProtKB"/>
</dbReference>
<dbReference type="GO" id="GO:1901612">
    <property type="term" value="F:cardiolipin binding"/>
    <property type="evidence" value="ECO:0000250"/>
    <property type="project" value="UniProtKB"/>
</dbReference>
<dbReference type="GO" id="GO:0035694">
    <property type="term" value="P:mitochondrial protein catabolic process"/>
    <property type="evidence" value="ECO:0000250"/>
    <property type="project" value="UniProtKB"/>
</dbReference>
<dbReference type="GO" id="GO:0035695">
    <property type="term" value="P:mitophagy by internal vacuole formation"/>
    <property type="evidence" value="ECO:0000318"/>
    <property type="project" value="GO_Central"/>
</dbReference>
<dbReference type="InterPro" id="IPR026169">
    <property type="entry name" value="MIEAP"/>
</dbReference>
<dbReference type="InterPro" id="IPR031981">
    <property type="entry name" value="MIEAP_C"/>
</dbReference>
<dbReference type="PANTHER" id="PTHR21771:SF2">
    <property type="entry name" value="MITOCHONDRIA-EATING PROTEIN"/>
    <property type="match status" value="1"/>
</dbReference>
<dbReference type="PANTHER" id="PTHR21771">
    <property type="entry name" value="MITOCHONDRIA-EATING PROTEIN-RELATED"/>
    <property type="match status" value="1"/>
</dbReference>
<dbReference type="Pfam" id="PF16026">
    <property type="entry name" value="MIEAP"/>
    <property type="match status" value="1"/>
</dbReference>
<name>MIEAP_XENLA</name>
<comment type="function">
    <text evidence="1">Key regulator of mitochondrial quality that mediates the repairing or degradation of unhealthy mitochondria in response to mitochondrial damage. Mediator of mitochondrial protein catabolic process (also named MALM) by mediating the degradation of damaged proteins inside mitochondria by promoting the accumulation in the mitochondrial matrix of hydrolases that are characteristic of the lysosomal lumen. Also involved in mitochondrion degradation of damaged mitochondria by promoting the formation of vacuole-like structures (named MIV), which engulf and degrade unhealthy mitochondria by accumulating lysosomes. Binds cardiolipin. May form molecular condensates (non-membrane-bounded organelles) within mitochondria that compartmentalize and promote cardiolipin metabolism.</text>
</comment>
<comment type="subcellular location">
    <subcellularLocation>
        <location evidence="1">Cytoplasm</location>
    </subcellularLocation>
    <subcellularLocation>
        <location evidence="1">Mitochondrion outer membrane</location>
    </subcellularLocation>
    <subcellularLocation>
        <location evidence="1">Mitochondrion matrix</location>
    </subcellularLocation>
    <text evidence="1">Localizes to the cytoplasm under normal conditions. Relocalizes to mitochondrion outer membrane following cellular stress. May form molecular condensates in the mitochondrial matrix.</text>
</comment>
<comment type="similarity">
    <text evidence="4">Belongs to the MIEAP family.</text>
</comment>
<proteinExistence type="evidence at transcript level"/>